<keyword id="KW-1185">Reference proteome</keyword>
<keyword id="KW-0687">Ribonucleoprotein</keyword>
<keyword id="KW-0689">Ribosomal protein</keyword>
<keyword id="KW-0694">RNA-binding</keyword>
<keyword id="KW-0699">rRNA-binding</keyword>
<proteinExistence type="inferred from homology"/>
<reference key="1">
    <citation type="journal article" date="2003" name="Science">
        <title>Role of mobile DNA in the evolution of vancomycin-resistant Enterococcus faecalis.</title>
        <authorList>
            <person name="Paulsen I.T."/>
            <person name="Banerjei L."/>
            <person name="Myers G.S.A."/>
            <person name="Nelson K.E."/>
            <person name="Seshadri R."/>
            <person name="Read T.D."/>
            <person name="Fouts D.E."/>
            <person name="Eisen J.A."/>
            <person name="Gill S.R."/>
            <person name="Heidelberg J.F."/>
            <person name="Tettelin H."/>
            <person name="Dodson R.J."/>
            <person name="Umayam L.A."/>
            <person name="Brinkac L.M."/>
            <person name="Beanan M.J."/>
            <person name="Daugherty S.C."/>
            <person name="DeBoy R.T."/>
            <person name="Durkin S.A."/>
            <person name="Kolonay J.F."/>
            <person name="Madupu R."/>
            <person name="Nelson W.C."/>
            <person name="Vamathevan J.J."/>
            <person name="Tran B."/>
            <person name="Upton J."/>
            <person name="Hansen T."/>
            <person name="Shetty J."/>
            <person name="Khouri H.M."/>
            <person name="Utterback T.R."/>
            <person name="Radune D."/>
            <person name="Ketchum K.A."/>
            <person name="Dougherty B.A."/>
            <person name="Fraser C.M."/>
        </authorList>
    </citation>
    <scope>NUCLEOTIDE SEQUENCE [LARGE SCALE GENOMIC DNA]</scope>
    <source>
        <strain>ATCC 700802 / V583</strain>
    </source>
</reference>
<name>RL10_ENTFA</name>
<organism>
    <name type="scientific">Enterococcus faecalis (strain ATCC 700802 / V583)</name>
    <dbReference type="NCBI Taxonomy" id="226185"/>
    <lineage>
        <taxon>Bacteria</taxon>
        <taxon>Bacillati</taxon>
        <taxon>Bacillota</taxon>
        <taxon>Bacilli</taxon>
        <taxon>Lactobacillales</taxon>
        <taxon>Enterococcaceae</taxon>
        <taxon>Enterococcus</taxon>
    </lineage>
</organism>
<dbReference type="EMBL" id="AE016830">
    <property type="protein sequence ID" value="AAO82419.1"/>
    <property type="molecule type" value="Genomic_DNA"/>
</dbReference>
<dbReference type="RefSeq" id="NP_816349.1">
    <property type="nucleotide sequence ID" value="NC_004668.1"/>
</dbReference>
<dbReference type="RefSeq" id="WP_002356426.1">
    <property type="nucleotide sequence ID" value="NZ_KE136528.1"/>
</dbReference>
<dbReference type="SMR" id="Q830Q7"/>
<dbReference type="STRING" id="226185.EF_2716"/>
<dbReference type="EnsemblBacteria" id="AAO82419">
    <property type="protein sequence ID" value="AAO82419"/>
    <property type="gene ID" value="EF_2716"/>
</dbReference>
<dbReference type="GeneID" id="60894704"/>
<dbReference type="KEGG" id="efa:EF2716"/>
<dbReference type="PATRIC" id="fig|226185.45.peg.850"/>
<dbReference type="eggNOG" id="COG0244">
    <property type="taxonomic scope" value="Bacteria"/>
</dbReference>
<dbReference type="HOGENOM" id="CLU_092227_2_0_9"/>
<dbReference type="Proteomes" id="UP000001415">
    <property type="component" value="Chromosome"/>
</dbReference>
<dbReference type="GO" id="GO:1990904">
    <property type="term" value="C:ribonucleoprotein complex"/>
    <property type="evidence" value="ECO:0007669"/>
    <property type="project" value="UniProtKB-KW"/>
</dbReference>
<dbReference type="GO" id="GO:0005840">
    <property type="term" value="C:ribosome"/>
    <property type="evidence" value="ECO:0007669"/>
    <property type="project" value="UniProtKB-KW"/>
</dbReference>
<dbReference type="GO" id="GO:0070180">
    <property type="term" value="F:large ribosomal subunit rRNA binding"/>
    <property type="evidence" value="ECO:0007669"/>
    <property type="project" value="UniProtKB-UniRule"/>
</dbReference>
<dbReference type="GO" id="GO:0006412">
    <property type="term" value="P:translation"/>
    <property type="evidence" value="ECO:0007669"/>
    <property type="project" value="UniProtKB-UniRule"/>
</dbReference>
<dbReference type="CDD" id="cd05797">
    <property type="entry name" value="Ribosomal_L10"/>
    <property type="match status" value="1"/>
</dbReference>
<dbReference type="FunFam" id="3.30.70.1730:FF:000001">
    <property type="entry name" value="50S ribosomal protein L10"/>
    <property type="match status" value="1"/>
</dbReference>
<dbReference type="Gene3D" id="3.30.70.1730">
    <property type="match status" value="1"/>
</dbReference>
<dbReference type="HAMAP" id="MF_00362">
    <property type="entry name" value="Ribosomal_uL10"/>
    <property type="match status" value="1"/>
</dbReference>
<dbReference type="InterPro" id="IPR001790">
    <property type="entry name" value="Ribosomal_uL10"/>
</dbReference>
<dbReference type="InterPro" id="IPR043141">
    <property type="entry name" value="Ribosomal_uL10-like_sf"/>
</dbReference>
<dbReference type="InterPro" id="IPR022973">
    <property type="entry name" value="Ribosomal_uL10_bac"/>
</dbReference>
<dbReference type="InterPro" id="IPR047865">
    <property type="entry name" value="Ribosomal_uL10_bac_type"/>
</dbReference>
<dbReference type="NCBIfam" id="NF000955">
    <property type="entry name" value="PRK00099.1-1"/>
    <property type="match status" value="1"/>
</dbReference>
<dbReference type="PANTHER" id="PTHR11560">
    <property type="entry name" value="39S RIBOSOMAL PROTEIN L10, MITOCHONDRIAL"/>
    <property type="match status" value="1"/>
</dbReference>
<dbReference type="Pfam" id="PF00466">
    <property type="entry name" value="Ribosomal_L10"/>
    <property type="match status" value="1"/>
</dbReference>
<dbReference type="SUPFAM" id="SSF160369">
    <property type="entry name" value="Ribosomal protein L10-like"/>
    <property type="match status" value="1"/>
</dbReference>
<gene>
    <name evidence="1" type="primary">rplJ</name>
    <name type="ordered locus">EF_2716</name>
</gene>
<protein>
    <recommendedName>
        <fullName evidence="1">Large ribosomal subunit protein uL10</fullName>
    </recommendedName>
    <alternativeName>
        <fullName evidence="2">50S ribosomal protein L10</fullName>
    </alternativeName>
</protein>
<evidence type="ECO:0000255" key="1">
    <source>
        <dbReference type="HAMAP-Rule" id="MF_00362"/>
    </source>
</evidence>
<evidence type="ECO:0000305" key="2"/>
<accession>Q830Q7</accession>
<feature type="chain" id="PRO_0000154631" description="Large ribosomal subunit protein uL10">
    <location>
        <begin position="1"/>
        <end position="166"/>
    </location>
</feature>
<comment type="function">
    <text evidence="1">Forms part of the ribosomal stalk, playing a central role in the interaction of the ribosome with GTP-bound translation factors.</text>
</comment>
<comment type="subunit">
    <text evidence="1">Part of the ribosomal stalk of the 50S ribosomal subunit. The N-terminus interacts with L11 and the large rRNA to form the base of the stalk. The C-terminus forms an elongated spine to which L12 dimers bind in a sequential fashion forming a multimeric L10(L12)X complex.</text>
</comment>
<comment type="similarity">
    <text evidence="1">Belongs to the universal ribosomal protein uL10 family.</text>
</comment>
<sequence length="166" mass="17622">MSEAAIAKKETLVQAAAEKFESAASVVIVDYRGLTVEEVTNLRKQLRDAGVEMKVIKNSILSRAAKKVGLDGLDEVFTGPTAVAFSNDDVVAPAKIIDEFAKDAKALEIKGGVIEGKVSSVEQITALAKLPNREGLLSMLLSVLQAPVRNVAYAVKAVAEKNEEVA</sequence>